<accession>P38041</accession>
<accession>D6VPR9</accession>
<comment type="function">
    <text evidence="7 8">Functions redundantly with BOI2 to promote the fusion of secretory vesicles with the plasma membrane at sites of polarized growth.</text>
</comment>
<comment type="subunit">
    <text evidence="8">Interacts with BEM1.</text>
</comment>
<comment type="interaction">
    <interactant intactId="EBI-3719">
        <id>P38041</id>
    </interactant>
    <interactant intactId="EBI-3508">
        <id>P29366</id>
        <label>BEM1</label>
    </interactant>
    <organismsDiffer>false</organismsDiffer>
    <experiments>5</experiments>
</comment>
<comment type="interaction">
    <interactant intactId="EBI-3719">
        <id>P38041</id>
    </interactant>
    <interactant intactId="EBI-4192">
        <id>Q00684</id>
        <label>CDC14</label>
    </interactant>
    <organismsDiffer>false</organismsDiffer>
    <experiments>2</experiments>
</comment>
<comment type="interaction">
    <interactant intactId="EBI-3719">
        <id>P38041</id>
    </interactant>
    <interactant intactId="EBI-13431">
        <id>P40020</id>
        <label>FIR1</label>
    </interactant>
    <organismsDiffer>false</organismsDiffer>
    <experiments>2</experiments>
</comment>
<comment type="interaction">
    <interactant intactId="EBI-3719">
        <id>P38041</id>
    </interactant>
    <interactant intactId="EBI-36841">
        <id>Q08229</id>
        <label>NBA1</label>
    </interactant>
    <organismsDiffer>false</organismsDiffer>
    <experiments>4</experiments>
</comment>
<comment type="interaction">
    <interactant intactId="EBI-3719">
        <id>P38041</id>
    </interactant>
    <interactant intactId="EBI-30094">
        <id>Q03780</id>
        <label>YDR239C</label>
    </interactant>
    <organismsDiffer>false</organismsDiffer>
    <experiments>2</experiments>
</comment>
<comment type="interaction">
    <interactant intactId="EBI-3719">
        <id>P38041</id>
    </interactant>
    <interactant intactId="EBI-22734">
        <id>P40095</id>
        <label>YER158C</label>
    </interactant>
    <organismsDiffer>false</organismsDiffer>
    <experiments>4</experiments>
</comment>
<comment type="interaction">
    <interactant intactId="EBI-3719">
        <id>P38041</id>
    </interactant>
    <interactant intactId="EBI-25514">
        <id>P47115</id>
        <label>YJR056C</label>
    </interactant>
    <organismsDiffer>false</organismsDiffer>
    <experiments>3</experiments>
</comment>
<comment type="interaction">
    <interactant intactId="EBI-3719">
        <id>P38041</id>
    </interactant>
    <interactant intactId="EBI-29637">
        <id>P54786</id>
        <label>ZDS2</label>
    </interactant>
    <organismsDiffer>false</organismsDiffer>
    <experiments>3</experiments>
</comment>
<comment type="subcellular location">
    <subcellularLocation>
        <location evidence="5">Bud</location>
    </subcellularLocation>
    <subcellularLocation>
        <location evidence="5">Bud neck</location>
    </subcellularLocation>
    <text evidence="5">Localizes to the periphery of buds during much of the budding cycle and to necks late in the cell cycle.</text>
</comment>
<comment type="domain">
    <text evidence="5">The PH domain binds to phospholipids which is important for localization to the bud.</text>
</comment>
<comment type="domain">
    <text evidence="5">The SH3 domain is important for localization to the neck.</text>
</comment>
<comment type="disruption phenotype">
    <text evidence="7">Leads to the accumulation of secretory vesicles and impairs bud growth.</text>
</comment>
<comment type="miscellaneous">
    <text evidence="6">Present with 1040 molecules/cell in log phase SD medium.</text>
</comment>
<evidence type="ECO:0000255" key="1">
    <source>
        <dbReference type="PROSITE-ProRule" id="PRU00145"/>
    </source>
</evidence>
<evidence type="ECO:0000255" key="2">
    <source>
        <dbReference type="PROSITE-ProRule" id="PRU00184"/>
    </source>
</evidence>
<evidence type="ECO:0000255" key="3">
    <source>
        <dbReference type="PROSITE-ProRule" id="PRU00192"/>
    </source>
</evidence>
<evidence type="ECO:0000256" key="4">
    <source>
        <dbReference type="SAM" id="MobiDB-lite"/>
    </source>
</evidence>
<evidence type="ECO:0000269" key="5">
    <source>
    </source>
</evidence>
<evidence type="ECO:0000269" key="6">
    <source>
    </source>
</evidence>
<evidence type="ECO:0000269" key="7">
    <source>
    </source>
</evidence>
<evidence type="ECO:0000269" key="8">
    <source>
    </source>
</evidence>
<evidence type="ECO:0000303" key="9">
    <source>
    </source>
</evidence>
<evidence type="ECO:0007744" key="10">
    <source>
    </source>
</evidence>
<evidence type="ECO:0007744" key="11">
    <source>
    </source>
</evidence>
<evidence type="ECO:0007744" key="12">
    <source>
    </source>
</evidence>
<evidence type="ECO:0007744" key="13">
    <source>
    </source>
</evidence>
<evidence type="ECO:0007744" key="14">
    <source>
    </source>
</evidence>
<dbReference type="EMBL" id="L31406">
    <property type="protein sequence ID" value="AAB08439.1"/>
    <property type="molecule type" value="Genomic_DNA"/>
</dbReference>
<dbReference type="EMBL" id="X79489">
    <property type="protein sequence ID" value="CAA56021.1"/>
    <property type="molecule type" value="Genomic_DNA"/>
</dbReference>
<dbReference type="EMBL" id="Z35846">
    <property type="protein sequence ID" value="CAA84906.1"/>
    <property type="molecule type" value="Genomic_DNA"/>
</dbReference>
<dbReference type="EMBL" id="BK006936">
    <property type="protein sequence ID" value="DAA07039.1"/>
    <property type="molecule type" value="Genomic_DNA"/>
</dbReference>
<dbReference type="PIR" id="S45444">
    <property type="entry name" value="S45444"/>
</dbReference>
<dbReference type="RefSeq" id="NP_009468.1">
    <property type="nucleotide sequence ID" value="NM_001178325.1"/>
</dbReference>
<dbReference type="SMR" id="P38041"/>
<dbReference type="BioGRID" id="32619">
    <property type="interactions" value="185"/>
</dbReference>
<dbReference type="DIP" id="DIP-2226N"/>
<dbReference type="FunCoup" id="P38041">
    <property type="interactions" value="279"/>
</dbReference>
<dbReference type="IntAct" id="P38041">
    <property type="interactions" value="82"/>
</dbReference>
<dbReference type="MINT" id="P38041"/>
<dbReference type="STRING" id="4932.YBL085W"/>
<dbReference type="GlyGen" id="P38041">
    <property type="glycosylation" value="3 sites, 1 O-linked glycan (3 sites)"/>
</dbReference>
<dbReference type="iPTMnet" id="P38041"/>
<dbReference type="PaxDb" id="4932-YBL085W"/>
<dbReference type="PeptideAtlas" id="P38041"/>
<dbReference type="EnsemblFungi" id="YBL085W_mRNA">
    <property type="protein sequence ID" value="YBL085W"/>
    <property type="gene ID" value="YBL085W"/>
</dbReference>
<dbReference type="GeneID" id="852193"/>
<dbReference type="KEGG" id="sce:YBL085W"/>
<dbReference type="AGR" id="SGD:S000000181"/>
<dbReference type="SGD" id="S000000181">
    <property type="gene designation" value="BOI1"/>
</dbReference>
<dbReference type="VEuPathDB" id="FungiDB:YBL085W"/>
<dbReference type="eggNOG" id="ENOG502QSRX">
    <property type="taxonomic scope" value="Eukaryota"/>
</dbReference>
<dbReference type="GeneTree" id="ENSGT00950000182882"/>
<dbReference type="HOGENOM" id="CLU_003845_0_0_1"/>
<dbReference type="InParanoid" id="P38041"/>
<dbReference type="OMA" id="FGDGWWE"/>
<dbReference type="OrthoDB" id="73680at2759"/>
<dbReference type="BioCyc" id="YEAST:G3O-28974-MONOMER"/>
<dbReference type="Reactome" id="R-SCE-1660499">
    <property type="pathway name" value="Synthesis of PIPs at the plasma membrane"/>
</dbReference>
<dbReference type="BioGRID-ORCS" id="852193">
    <property type="hits" value="1 hit in 10 CRISPR screens"/>
</dbReference>
<dbReference type="PRO" id="PR:P38041"/>
<dbReference type="Proteomes" id="UP000002311">
    <property type="component" value="Chromosome II"/>
</dbReference>
<dbReference type="RNAct" id="P38041">
    <property type="molecule type" value="protein"/>
</dbReference>
<dbReference type="GO" id="GO:0005933">
    <property type="term" value="C:cellular bud"/>
    <property type="evidence" value="ECO:0000314"/>
    <property type="project" value="SGD"/>
</dbReference>
<dbReference type="GO" id="GO:0005935">
    <property type="term" value="C:cellular bud neck"/>
    <property type="evidence" value="ECO:0000314"/>
    <property type="project" value="SGD"/>
</dbReference>
<dbReference type="GO" id="GO:0005737">
    <property type="term" value="C:cytoplasm"/>
    <property type="evidence" value="ECO:0007005"/>
    <property type="project" value="SGD"/>
</dbReference>
<dbReference type="GO" id="GO:0005829">
    <property type="term" value="C:cytosol"/>
    <property type="evidence" value="ECO:0007669"/>
    <property type="project" value="GOC"/>
</dbReference>
<dbReference type="GO" id="GO:0005769">
    <property type="term" value="C:early endosome"/>
    <property type="evidence" value="ECO:0000318"/>
    <property type="project" value="GO_Central"/>
</dbReference>
<dbReference type="GO" id="GO:0043332">
    <property type="term" value="C:mating projection tip"/>
    <property type="evidence" value="ECO:0007005"/>
    <property type="project" value="SGD"/>
</dbReference>
<dbReference type="GO" id="GO:0005886">
    <property type="term" value="C:plasma membrane"/>
    <property type="evidence" value="ECO:0007005"/>
    <property type="project" value="SGD"/>
</dbReference>
<dbReference type="GO" id="GO:0055037">
    <property type="term" value="C:recycling endosome"/>
    <property type="evidence" value="ECO:0000318"/>
    <property type="project" value="GO_Central"/>
</dbReference>
<dbReference type="GO" id="GO:0030427">
    <property type="term" value="C:site of polarized growth"/>
    <property type="evidence" value="ECO:0000314"/>
    <property type="project" value="SGD"/>
</dbReference>
<dbReference type="GO" id="GO:0005802">
    <property type="term" value="C:trans-Golgi network"/>
    <property type="evidence" value="ECO:0000318"/>
    <property type="project" value="GO_Central"/>
</dbReference>
<dbReference type="GO" id="GO:0005543">
    <property type="term" value="F:phospholipid binding"/>
    <property type="evidence" value="ECO:0000314"/>
    <property type="project" value="SGD"/>
</dbReference>
<dbReference type="GO" id="GO:0007015">
    <property type="term" value="P:actin filament organization"/>
    <property type="evidence" value="ECO:0000316"/>
    <property type="project" value="SGD"/>
</dbReference>
<dbReference type="GO" id="GO:0007118">
    <property type="term" value="P:budding cell apical bud growth"/>
    <property type="evidence" value="ECO:0000316"/>
    <property type="project" value="SGD"/>
</dbReference>
<dbReference type="GO" id="GO:0007032">
    <property type="term" value="P:endosome organization"/>
    <property type="evidence" value="ECO:0000318"/>
    <property type="project" value="GO_Central"/>
</dbReference>
<dbReference type="GO" id="GO:0001881">
    <property type="term" value="P:receptor recycling"/>
    <property type="evidence" value="ECO:0000318"/>
    <property type="project" value="GO_Central"/>
</dbReference>
<dbReference type="GO" id="GO:0042147">
    <property type="term" value="P:retrograde transport, endosome to Golgi"/>
    <property type="evidence" value="ECO:0000318"/>
    <property type="project" value="GO_Central"/>
</dbReference>
<dbReference type="GO" id="GO:0000920">
    <property type="term" value="P:septum digestion after cytokinesis"/>
    <property type="evidence" value="ECO:0000316"/>
    <property type="project" value="SGD"/>
</dbReference>
<dbReference type="GO" id="GO:0099500">
    <property type="term" value="P:vesicle fusion to plasma membrane"/>
    <property type="evidence" value="ECO:0000315"/>
    <property type="project" value="SGD"/>
</dbReference>
<dbReference type="CDD" id="cd13316">
    <property type="entry name" value="PH_Boi"/>
    <property type="match status" value="1"/>
</dbReference>
<dbReference type="CDD" id="cd11886">
    <property type="entry name" value="SH3_BOI"/>
    <property type="match status" value="1"/>
</dbReference>
<dbReference type="FunFam" id="1.10.150.50:FF:000090">
    <property type="entry name" value="Bem1 interacting protein"/>
    <property type="match status" value="1"/>
</dbReference>
<dbReference type="FunFam" id="2.30.29.30:FF:000230">
    <property type="entry name" value="Polarized growth protein (Boi2)"/>
    <property type="match status" value="1"/>
</dbReference>
<dbReference type="FunFam" id="2.30.30.40:FF:000259">
    <property type="entry name" value="Protein BOI2"/>
    <property type="match status" value="1"/>
</dbReference>
<dbReference type="Gene3D" id="2.30.29.30">
    <property type="entry name" value="Pleckstrin-homology domain (PH domain)/Phosphotyrosine-binding domain (PTB)"/>
    <property type="match status" value="1"/>
</dbReference>
<dbReference type="Gene3D" id="2.30.30.40">
    <property type="entry name" value="SH3 Domains"/>
    <property type="match status" value="1"/>
</dbReference>
<dbReference type="Gene3D" id="1.10.150.50">
    <property type="entry name" value="Transcription Factor, Ets-1"/>
    <property type="match status" value="1"/>
</dbReference>
<dbReference type="InterPro" id="IPR035551">
    <property type="entry name" value="Boi1/2_SH3"/>
</dbReference>
<dbReference type="InterPro" id="IPR045188">
    <property type="entry name" value="Boi1/Boi2-like"/>
</dbReference>
<dbReference type="InterPro" id="IPR011993">
    <property type="entry name" value="PH-like_dom_sf"/>
</dbReference>
<dbReference type="InterPro" id="IPR001849">
    <property type="entry name" value="PH_domain"/>
</dbReference>
<dbReference type="InterPro" id="IPR001660">
    <property type="entry name" value="SAM"/>
</dbReference>
<dbReference type="InterPro" id="IPR013761">
    <property type="entry name" value="SAM/pointed_sf"/>
</dbReference>
<dbReference type="InterPro" id="IPR036028">
    <property type="entry name" value="SH3-like_dom_sf"/>
</dbReference>
<dbReference type="InterPro" id="IPR001452">
    <property type="entry name" value="SH3_domain"/>
</dbReference>
<dbReference type="PANTHER" id="PTHR22902:SF27">
    <property type="entry name" value="PLECKSTRIN HOMOLOGY DOMAIN-CONTAINING FAMILY A MEMBER 3"/>
    <property type="match status" value="1"/>
</dbReference>
<dbReference type="PANTHER" id="PTHR22902">
    <property type="entry name" value="SESQUIPEDALIAN"/>
    <property type="match status" value="1"/>
</dbReference>
<dbReference type="Pfam" id="PF00169">
    <property type="entry name" value="PH"/>
    <property type="match status" value="1"/>
</dbReference>
<dbReference type="Pfam" id="PF07647">
    <property type="entry name" value="SAM_2"/>
    <property type="match status" value="1"/>
</dbReference>
<dbReference type="Pfam" id="PF00018">
    <property type="entry name" value="SH3_1"/>
    <property type="match status" value="1"/>
</dbReference>
<dbReference type="SMART" id="SM00233">
    <property type="entry name" value="PH"/>
    <property type="match status" value="1"/>
</dbReference>
<dbReference type="SMART" id="SM00454">
    <property type="entry name" value="SAM"/>
    <property type="match status" value="1"/>
</dbReference>
<dbReference type="SMART" id="SM00326">
    <property type="entry name" value="SH3"/>
    <property type="match status" value="1"/>
</dbReference>
<dbReference type="SUPFAM" id="SSF50729">
    <property type="entry name" value="PH domain-like"/>
    <property type="match status" value="1"/>
</dbReference>
<dbReference type="SUPFAM" id="SSF47769">
    <property type="entry name" value="SAM/Pointed domain"/>
    <property type="match status" value="1"/>
</dbReference>
<dbReference type="SUPFAM" id="SSF50044">
    <property type="entry name" value="SH3-domain"/>
    <property type="match status" value="1"/>
</dbReference>
<dbReference type="PROSITE" id="PS50003">
    <property type="entry name" value="PH_DOMAIN"/>
    <property type="match status" value="1"/>
</dbReference>
<dbReference type="PROSITE" id="PS50105">
    <property type="entry name" value="SAM_DOMAIN"/>
    <property type="match status" value="1"/>
</dbReference>
<dbReference type="PROSITE" id="PS50002">
    <property type="entry name" value="SH3"/>
    <property type="match status" value="1"/>
</dbReference>
<proteinExistence type="evidence at protein level"/>
<feature type="chain" id="PRO_0000064968" description="BEM1-interacting protein 1">
    <location>
        <begin position="1"/>
        <end position="980"/>
    </location>
</feature>
<feature type="domain" description="SH3" evidence="3">
    <location>
        <begin position="13"/>
        <end position="77"/>
    </location>
</feature>
<feature type="domain" description="SAM" evidence="2">
    <location>
        <begin position="228"/>
        <end position="292"/>
    </location>
</feature>
<feature type="domain" description="PH" evidence="1">
    <location>
        <begin position="776"/>
        <end position="895"/>
    </location>
</feature>
<feature type="region of interest" description="Disordered" evidence="4">
    <location>
        <begin position="139"/>
        <end position="163"/>
    </location>
</feature>
<feature type="region of interest" description="Disordered" evidence="4">
    <location>
        <begin position="333"/>
        <end position="356"/>
    </location>
</feature>
<feature type="region of interest" description="Disordered" evidence="4">
    <location>
        <begin position="390"/>
        <end position="438"/>
    </location>
</feature>
<feature type="region of interest" description="Disordered" evidence="4">
    <location>
        <begin position="544"/>
        <end position="762"/>
    </location>
</feature>
<feature type="region of interest" description="Disordered" evidence="4">
    <location>
        <begin position="930"/>
        <end position="980"/>
    </location>
</feature>
<feature type="compositionally biased region" description="Polar residues" evidence="4">
    <location>
        <begin position="141"/>
        <end position="150"/>
    </location>
</feature>
<feature type="compositionally biased region" description="Pro residues" evidence="4">
    <location>
        <begin position="397"/>
        <end position="412"/>
    </location>
</feature>
<feature type="compositionally biased region" description="Polar residues" evidence="4">
    <location>
        <begin position="415"/>
        <end position="438"/>
    </location>
</feature>
<feature type="compositionally biased region" description="Basic and acidic residues" evidence="4">
    <location>
        <begin position="573"/>
        <end position="582"/>
    </location>
</feature>
<feature type="compositionally biased region" description="Low complexity" evidence="4">
    <location>
        <begin position="589"/>
        <end position="608"/>
    </location>
</feature>
<feature type="compositionally biased region" description="Low complexity" evidence="4">
    <location>
        <begin position="621"/>
        <end position="638"/>
    </location>
</feature>
<feature type="compositionally biased region" description="Polar residues" evidence="4">
    <location>
        <begin position="645"/>
        <end position="662"/>
    </location>
</feature>
<feature type="compositionally biased region" description="Polar residues" evidence="4">
    <location>
        <begin position="669"/>
        <end position="683"/>
    </location>
</feature>
<feature type="compositionally biased region" description="Basic residues" evidence="4">
    <location>
        <begin position="687"/>
        <end position="703"/>
    </location>
</feature>
<feature type="compositionally biased region" description="Polar residues" evidence="4">
    <location>
        <begin position="737"/>
        <end position="746"/>
    </location>
</feature>
<feature type="compositionally biased region" description="Polar residues" evidence="4">
    <location>
        <begin position="950"/>
        <end position="968"/>
    </location>
</feature>
<feature type="modified residue" description="Phosphoserine" evidence="12 14">
    <location>
        <position position="104"/>
    </location>
</feature>
<feature type="modified residue" description="Phosphoserine" evidence="14">
    <location>
        <position position="106"/>
    </location>
</feature>
<feature type="modified residue" description="Phosphoserine" evidence="14">
    <location>
        <position position="128"/>
    </location>
</feature>
<feature type="modified residue" description="Phosphothreonine" evidence="14">
    <location>
        <position position="151"/>
    </location>
</feature>
<feature type="modified residue" description="Phosphothreonine" evidence="14">
    <location>
        <position position="158"/>
    </location>
</feature>
<feature type="modified residue" description="Phosphoserine" evidence="10 12 14">
    <location>
        <position position="209"/>
    </location>
</feature>
<feature type="modified residue" description="Phosphoserine" evidence="14">
    <location>
        <position position="393"/>
    </location>
</feature>
<feature type="modified residue" description="Phosphoserine" evidence="14">
    <location>
        <position position="412"/>
    </location>
</feature>
<feature type="modified residue" description="Phosphoserine" evidence="14">
    <location>
        <position position="525"/>
    </location>
</feature>
<feature type="modified residue" description="Phosphoserine" evidence="12 14">
    <location>
        <position position="528"/>
    </location>
</feature>
<feature type="modified residue" description="Phosphoserine" evidence="14">
    <location>
        <position position="589"/>
    </location>
</feature>
<feature type="modified residue" description="Phosphoserine" evidence="14">
    <location>
        <position position="590"/>
    </location>
</feature>
<feature type="modified residue" description="Phosphoserine" evidence="14">
    <location>
        <position position="593"/>
    </location>
</feature>
<feature type="modified residue" description="Phosphoserine" evidence="12 14">
    <location>
        <position position="644"/>
    </location>
</feature>
<feature type="modified residue" description="Phosphoserine" evidence="13">
    <location>
        <position position="655"/>
    </location>
</feature>
<feature type="modified residue" description="Phosphoserine" evidence="11">
    <location>
        <position position="735"/>
    </location>
</feature>
<feature type="modified residue" description="Phosphothreonine" evidence="12">
    <location>
        <position position="919"/>
    </location>
</feature>
<feature type="mutagenesis site" description="Affects the binding to phospholipids and impairs localization to the bud, but does not affect the localization to the neck." evidence="5">
    <original>K</original>
    <variation>E</variation>
    <location>
        <position position="785"/>
    </location>
</feature>
<feature type="mutagenesis site" description="Affects the binding to phospholipids and impairs localization to the bud, but does not affect the localization to the neck." evidence="5">
    <original>K</original>
    <variation>A</variation>
    <location>
        <position position="786"/>
    </location>
</feature>
<feature type="mutagenesis site" description="Affects the binding to phospholipids and impairs localization to the bud, but does not affect the localization to the neck." evidence="5">
    <original>T</original>
    <variation>A</variation>
    <location>
        <position position="793"/>
    </location>
</feature>
<feature type="mutagenesis site" description="Affects the binding to phospholipids and impairs localization to the bud, but does not affect the localization to the neck." evidence="5">
    <original>K</original>
    <variation>E</variation>
    <location>
        <position position="795"/>
    </location>
</feature>
<name>BOI1_YEAST</name>
<organism>
    <name type="scientific">Saccharomyces cerevisiae (strain ATCC 204508 / S288c)</name>
    <name type="common">Baker's yeast</name>
    <dbReference type="NCBI Taxonomy" id="559292"/>
    <lineage>
        <taxon>Eukaryota</taxon>
        <taxon>Fungi</taxon>
        <taxon>Dikarya</taxon>
        <taxon>Ascomycota</taxon>
        <taxon>Saccharomycotina</taxon>
        <taxon>Saccharomycetes</taxon>
        <taxon>Saccharomycetales</taxon>
        <taxon>Saccharomycetaceae</taxon>
        <taxon>Saccharomyces</taxon>
    </lineage>
</organism>
<reference key="1">
    <citation type="journal article" date="1996" name="J. Cell Biol.">
        <title>Associations among PH and SH3 domain-containing proteins and Rho-type GTPases in Yeast.</title>
        <authorList>
            <person name="Bender L."/>
            <person name="Lo H.S."/>
            <person name="Lee H."/>
            <person name="Kokojan V."/>
            <person name="Peterson V."/>
            <person name="Bender A."/>
        </authorList>
    </citation>
    <scope>NUCLEOTIDE SEQUENCE [GENOMIC DNA]</scope>
    <scope>FUNCTION</scope>
    <scope>INTERACTION WITH BEM1</scope>
</reference>
<reference key="2">
    <citation type="journal article" date="1995" name="Yeast">
        <title>Sequence analysis of a 78.6 kb segment of the left end of Saccharomyces cerevisiae chromosome II.</title>
        <authorList>
            <person name="Obermaier B."/>
            <person name="Gassenhuber J."/>
            <person name="Piravandi E."/>
            <person name="Domdey H."/>
        </authorList>
    </citation>
    <scope>NUCLEOTIDE SEQUENCE [GENOMIC DNA]</scope>
    <source>
        <strain>ATCC 204508 / S288c</strain>
    </source>
</reference>
<reference key="3">
    <citation type="journal article" date="1994" name="EMBO J.">
        <title>Complete DNA sequence of yeast chromosome II.</title>
        <authorList>
            <person name="Feldmann H."/>
            <person name="Aigle M."/>
            <person name="Aljinovic G."/>
            <person name="Andre B."/>
            <person name="Baclet M.C."/>
            <person name="Barthe C."/>
            <person name="Baur A."/>
            <person name="Becam A.-M."/>
            <person name="Biteau N."/>
            <person name="Boles E."/>
            <person name="Brandt T."/>
            <person name="Brendel M."/>
            <person name="Brueckner M."/>
            <person name="Bussereau F."/>
            <person name="Christiansen C."/>
            <person name="Contreras R."/>
            <person name="Crouzet M."/>
            <person name="Cziepluch C."/>
            <person name="Demolis N."/>
            <person name="Delaveau T."/>
            <person name="Doignon F."/>
            <person name="Domdey H."/>
            <person name="Duesterhus S."/>
            <person name="Dubois E."/>
            <person name="Dujon B."/>
            <person name="El Bakkoury M."/>
            <person name="Entian K.-D."/>
            <person name="Feuermann M."/>
            <person name="Fiers W."/>
            <person name="Fobo G.M."/>
            <person name="Fritz C."/>
            <person name="Gassenhuber J."/>
            <person name="Glansdorff N."/>
            <person name="Goffeau A."/>
            <person name="Grivell L.A."/>
            <person name="de Haan M."/>
            <person name="Hein C."/>
            <person name="Herbert C.J."/>
            <person name="Hollenberg C.P."/>
            <person name="Holmstroem K."/>
            <person name="Jacq C."/>
            <person name="Jacquet M."/>
            <person name="Jauniaux J.-C."/>
            <person name="Jonniaux J.-L."/>
            <person name="Kallesoee T."/>
            <person name="Kiesau P."/>
            <person name="Kirchrath L."/>
            <person name="Koetter P."/>
            <person name="Korol S."/>
            <person name="Liebl S."/>
            <person name="Logghe M."/>
            <person name="Lohan A.J.E."/>
            <person name="Louis E.J."/>
            <person name="Li Z.Y."/>
            <person name="Maat M.J."/>
            <person name="Mallet L."/>
            <person name="Mannhaupt G."/>
            <person name="Messenguy F."/>
            <person name="Miosga T."/>
            <person name="Molemans F."/>
            <person name="Mueller S."/>
            <person name="Nasr F."/>
            <person name="Obermaier B."/>
            <person name="Perea J."/>
            <person name="Pierard A."/>
            <person name="Piravandi E."/>
            <person name="Pohl F.M."/>
            <person name="Pohl T.M."/>
            <person name="Potier S."/>
            <person name="Proft M."/>
            <person name="Purnelle B."/>
            <person name="Ramezani Rad M."/>
            <person name="Rieger M."/>
            <person name="Rose M."/>
            <person name="Schaaff-Gerstenschlaeger I."/>
            <person name="Scherens B."/>
            <person name="Schwarzlose C."/>
            <person name="Skala J."/>
            <person name="Slonimski P.P."/>
            <person name="Smits P.H.M."/>
            <person name="Souciet J.-L."/>
            <person name="Steensma H.Y."/>
            <person name="Stucka R."/>
            <person name="Urrestarazu L.A."/>
            <person name="van der Aart Q.J.M."/>
            <person name="Van Dyck L."/>
            <person name="Vassarotti A."/>
            <person name="Vetter I."/>
            <person name="Vierendeels F."/>
            <person name="Vissers S."/>
            <person name="Wagner G."/>
            <person name="de Wergifosse P."/>
            <person name="Wolfe K.H."/>
            <person name="Zagulski M."/>
            <person name="Zimmermann F.K."/>
            <person name="Mewes H.-W."/>
            <person name="Kleine K."/>
        </authorList>
    </citation>
    <scope>NUCLEOTIDE SEQUENCE [LARGE SCALE GENOMIC DNA]</scope>
    <source>
        <strain>ATCC 204508 / S288c</strain>
    </source>
</reference>
<reference key="4">
    <citation type="journal article" date="2014" name="G3 (Bethesda)">
        <title>The reference genome sequence of Saccharomyces cerevisiae: Then and now.</title>
        <authorList>
            <person name="Engel S.R."/>
            <person name="Dietrich F.S."/>
            <person name="Fisk D.G."/>
            <person name="Binkley G."/>
            <person name="Balakrishnan R."/>
            <person name="Costanzo M.C."/>
            <person name="Dwight S.S."/>
            <person name="Hitz B.C."/>
            <person name="Karra K."/>
            <person name="Nash R.S."/>
            <person name="Weng S."/>
            <person name="Wong E.D."/>
            <person name="Lloyd P."/>
            <person name="Skrzypek M.S."/>
            <person name="Miyasato S.R."/>
            <person name="Simison M."/>
            <person name="Cherry J.M."/>
        </authorList>
    </citation>
    <scope>GENOME REANNOTATION</scope>
    <source>
        <strain>ATCC 204508 / S288c</strain>
    </source>
</reference>
<reference key="5">
    <citation type="journal article" date="2002" name="BMC Cell Biol.">
        <title>Probing the importance and potential roles of the binding of the PH-domain protein Boi1 to acidic phospholipids.</title>
        <authorList>
            <person name="Hallett M.A."/>
            <person name="Lo H.S."/>
            <person name="Bender A."/>
        </authorList>
    </citation>
    <scope>SUBCELLULAR LOCATION</scope>
    <scope>DOMAIN</scope>
    <scope>MUTAGENESIS OF LYS-785; LYS-786; THR-793 AND LYS-795</scope>
</reference>
<reference key="6">
    <citation type="journal article" date="2003" name="Nature">
        <title>Global analysis of protein expression in yeast.</title>
        <authorList>
            <person name="Ghaemmaghami S."/>
            <person name="Huh W.-K."/>
            <person name="Bower K."/>
            <person name="Howson R.W."/>
            <person name="Belle A."/>
            <person name="Dephoure N."/>
            <person name="O'Shea E.K."/>
            <person name="Weissman J.S."/>
        </authorList>
    </citation>
    <scope>LEVEL OF PROTEIN EXPRESSION [LARGE SCALE ANALYSIS]</scope>
</reference>
<reference key="7">
    <citation type="journal article" date="2005" name="Mol. Cell. Proteomics">
        <title>Quantitative phosphoproteomics applied to the yeast pheromone signaling pathway.</title>
        <authorList>
            <person name="Gruhler A."/>
            <person name="Olsen J.V."/>
            <person name="Mohammed S."/>
            <person name="Mortensen P."/>
            <person name="Faergeman N.J."/>
            <person name="Mann M."/>
            <person name="Jensen O.N."/>
        </authorList>
    </citation>
    <scope>PHOSPHORYLATION [LARGE SCALE ANALYSIS] AT SER-209</scope>
    <scope>IDENTIFICATION BY MASS SPECTROMETRY [LARGE SCALE ANALYSIS]</scope>
    <source>
        <strain>YAL6B</strain>
    </source>
</reference>
<reference key="8">
    <citation type="journal article" date="2007" name="J. Proteome Res.">
        <title>Large-scale phosphorylation analysis of alpha-factor-arrested Saccharomyces cerevisiae.</title>
        <authorList>
            <person name="Li X."/>
            <person name="Gerber S.A."/>
            <person name="Rudner A.D."/>
            <person name="Beausoleil S.A."/>
            <person name="Haas W."/>
            <person name="Villen J."/>
            <person name="Elias J.E."/>
            <person name="Gygi S.P."/>
        </authorList>
    </citation>
    <scope>PHOSPHORYLATION [LARGE SCALE ANALYSIS] AT SER-104; SER-209; SER-528; SER-644 AND THR-919</scope>
    <scope>IDENTIFICATION BY MASS SPECTROMETRY [LARGE SCALE ANALYSIS]</scope>
    <source>
        <strain>ADR376</strain>
    </source>
</reference>
<reference key="9">
    <citation type="journal article" date="2007" name="Proc. Natl. Acad. Sci. U.S.A.">
        <title>Analysis of phosphorylation sites on proteins from Saccharomyces cerevisiae by electron transfer dissociation (ETD) mass spectrometry.</title>
        <authorList>
            <person name="Chi A."/>
            <person name="Huttenhower C."/>
            <person name="Geer L.Y."/>
            <person name="Coon J.J."/>
            <person name="Syka J.E.P."/>
            <person name="Bai D.L."/>
            <person name="Shabanowitz J."/>
            <person name="Burke D.J."/>
            <person name="Troyanskaya O.G."/>
            <person name="Hunt D.F."/>
        </authorList>
    </citation>
    <scope>PHOSPHORYLATION [LARGE SCALE ANALYSIS] AT SER-735</scope>
    <scope>IDENTIFICATION BY MASS SPECTROMETRY [LARGE SCALE ANALYSIS]</scope>
</reference>
<reference key="10">
    <citation type="journal article" date="2008" name="Mol. Cell. Proteomics">
        <title>A multidimensional chromatography technology for in-depth phosphoproteome analysis.</title>
        <authorList>
            <person name="Albuquerque C.P."/>
            <person name="Smolka M.B."/>
            <person name="Payne S.H."/>
            <person name="Bafna V."/>
            <person name="Eng J."/>
            <person name="Zhou H."/>
        </authorList>
    </citation>
    <scope>PHOSPHORYLATION [LARGE SCALE ANALYSIS] AT SER-655</scope>
    <scope>IDENTIFICATION BY MASS SPECTROMETRY [LARGE SCALE ANALYSIS]</scope>
</reference>
<reference key="11">
    <citation type="journal article" date="2009" name="Science">
        <title>Global analysis of Cdk1 substrate phosphorylation sites provides insights into evolution.</title>
        <authorList>
            <person name="Holt L.J."/>
            <person name="Tuch B.B."/>
            <person name="Villen J."/>
            <person name="Johnson A.D."/>
            <person name="Gygi S.P."/>
            <person name="Morgan D.O."/>
        </authorList>
    </citation>
    <scope>PHOSPHORYLATION [LARGE SCALE ANALYSIS] AT SER-104; SER-106; SER-128; THR-151; THR-158; SER-209; SER-393; SER-412; SER-525; SER-528; SER-589; SER-590; SER-593 AND SER-644</scope>
    <scope>IDENTIFICATION BY MASS SPECTROMETRY [LARGE SCALE ANALYSIS]</scope>
</reference>
<reference key="12">
    <citation type="journal article" date="2017" name="Mol. Biol. Cell">
        <title>Distinct roles of the polarity factors Boi1 and Boi2 in the control of exocytosis and abscission in budding yeast.</title>
        <authorList>
            <person name="Masgrau A."/>
            <person name="Battola A."/>
            <person name="Sanmartin T."/>
            <person name="Pryszcz L.P."/>
            <person name="Gabaldon T."/>
            <person name="Mendoza M."/>
        </authorList>
    </citation>
    <scope>FUNCTION</scope>
    <scope>DISRUPTION PHENOTYPE</scope>
</reference>
<keyword id="KW-0131">Cell cycle</keyword>
<keyword id="KW-0132">Cell division</keyword>
<keyword id="KW-0268">Exocytosis</keyword>
<keyword id="KW-0597">Phosphoprotein</keyword>
<keyword id="KW-1185">Reference proteome</keyword>
<keyword id="KW-0728">SH3 domain</keyword>
<protein>
    <recommendedName>
        <fullName evidence="9">BEM1-interacting protein 1</fullName>
    </recommendedName>
    <alternativeName>
        <fullName>Growth inhibitory protein 7</fullName>
    </alternativeName>
</protein>
<gene>
    <name evidence="9" type="primary">BOI1</name>
    <name type="synonym">BOB1</name>
    <name type="synonym">GIN7</name>
    <name type="ordered locus">YBL085W</name>
    <name type="ORF">YBL0717</name>
</gene>
<sequence>MSLEGNTLGKGAKSFPLYIAVNQYSKRMEDELNMKPGDKIKVITDDGEYNDGWYYGRNLRTKEEGLYPAVFTKRIAIEKPENLHKSPTQESGNSGVKYGNLNDSASNIGKVSSHQQENRYTSLKSTMSDIDKALEELRSGSVEQEVSKSPTRVPEVSTPQLQDEQTLIQEKTRNEENTTHDSLFSSTADLNLSSESLKNISKSNISTKSLEPSSESVRQLDLKMAKSWSPEEVTDYFSLVGFDQSTCNKFKEHQVSGKILLELELEHLKELEINSFGIRFQIFKEIRNIKSAIDSSSNKLDADYSTFAFENQAAQLMPAATVNRDEIQQQISSKCNKLSSESSDRKSSSVTTELQRPSSVVVNPNFKLHDPAEQILDMTEVPNLFADKDIFESPGRAPKPPSYPSPVQPPQSPSFNNRYTNNNARFPPQTTYPPKNKNPTVYSNGLIPNSSTSSDNSTGKFKFPAMNGHDSNSRKTTLTSATIPSINTVNTDESLPAISNISSNATSHHPNRNSVVYNNHKRTESGSSFVDLFNRISMLSPVKSSFDEEETKQPSKASRAVFDSARRKSSYGHSRDASLSEMKKHRRNSSILSFFSSKSQSNPTSPTKQTFTIDPAKMTSHSRSQSNSYSHARSQSYSHSRKHSLVTSPLKTSLSPINSKSNIALAHSETPTSSNNKEAVSQPSEGKHKHKHKHKSKHKHKNSSSKDGSSEEKSKKKLFSSTKESFVGSKEFKRSPSELTQKSTKSILPRSNAKKQQTSAFTEGIRSITAKESMQTADCSGWMSKKGTGAMGTWKQRFFTLHGTRLSYFTNTNDEKERGLIDITAHRVLPASDDDRLISLYAASLGKGKYCFKLVPPQPGSKKGLTFTEPRVHYFAVENKSEMKAWLSAIIKATIDIDTSVPVISSYATPTIPLSKAQTLLEEARLQTQLRDAEEEEGRDQFGWDDTQNKRNSNYPIEQDQFETSDYLESSAFEYPGGRL</sequence>